<dbReference type="EMBL" id="CP000800">
    <property type="protein sequence ID" value="ABV18939.1"/>
    <property type="molecule type" value="Genomic_DNA"/>
</dbReference>
<dbReference type="RefSeq" id="WP_000167336.1">
    <property type="nucleotide sequence ID" value="NC_009801.1"/>
</dbReference>
<dbReference type="SMR" id="A7ZK01"/>
<dbReference type="GeneID" id="93776505"/>
<dbReference type="KEGG" id="ecw:EcE24377A_1009"/>
<dbReference type="HOGENOM" id="CLU_105066_2_0_6"/>
<dbReference type="Proteomes" id="UP000001122">
    <property type="component" value="Chromosome"/>
</dbReference>
<dbReference type="GO" id="GO:0005694">
    <property type="term" value="C:chromosome"/>
    <property type="evidence" value="ECO:0007669"/>
    <property type="project" value="InterPro"/>
</dbReference>
<dbReference type="GO" id="GO:0005829">
    <property type="term" value="C:cytosol"/>
    <property type="evidence" value="ECO:0007669"/>
    <property type="project" value="TreeGrafter"/>
</dbReference>
<dbReference type="GO" id="GO:0003677">
    <property type="term" value="F:DNA binding"/>
    <property type="evidence" value="ECO:0007669"/>
    <property type="project" value="UniProtKB-UniRule"/>
</dbReference>
<dbReference type="GO" id="GO:0030527">
    <property type="term" value="F:structural constituent of chromatin"/>
    <property type="evidence" value="ECO:0007669"/>
    <property type="project" value="InterPro"/>
</dbReference>
<dbReference type="GO" id="GO:0006310">
    <property type="term" value="P:DNA recombination"/>
    <property type="evidence" value="ECO:0007669"/>
    <property type="project" value="UniProtKB-UniRule"/>
</dbReference>
<dbReference type="GO" id="GO:0006355">
    <property type="term" value="P:regulation of DNA-templated transcription"/>
    <property type="evidence" value="ECO:0007669"/>
    <property type="project" value="UniProtKB-UniRule"/>
</dbReference>
<dbReference type="GO" id="GO:0006417">
    <property type="term" value="P:regulation of translation"/>
    <property type="evidence" value="ECO:0007669"/>
    <property type="project" value="UniProtKB-UniRule"/>
</dbReference>
<dbReference type="CDD" id="cd13836">
    <property type="entry name" value="IHF_B"/>
    <property type="match status" value="1"/>
</dbReference>
<dbReference type="FunFam" id="4.10.520.10:FF:000003">
    <property type="entry name" value="Integration host factor subunit beta"/>
    <property type="match status" value="1"/>
</dbReference>
<dbReference type="Gene3D" id="4.10.520.10">
    <property type="entry name" value="IHF-like DNA-binding proteins"/>
    <property type="match status" value="1"/>
</dbReference>
<dbReference type="HAMAP" id="MF_00381">
    <property type="entry name" value="IHF_beta"/>
    <property type="match status" value="1"/>
</dbReference>
<dbReference type="InterPro" id="IPR000119">
    <property type="entry name" value="Hist_DNA-bd"/>
</dbReference>
<dbReference type="InterPro" id="IPR020816">
    <property type="entry name" value="Histone-like_DNA-bd_CS"/>
</dbReference>
<dbReference type="InterPro" id="IPR010992">
    <property type="entry name" value="IHF-like_DNA-bd_dom_sf"/>
</dbReference>
<dbReference type="InterPro" id="IPR005685">
    <property type="entry name" value="IHF_beta"/>
</dbReference>
<dbReference type="NCBIfam" id="TIGR00988">
    <property type="entry name" value="hip"/>
    <property type="match status" value="1"/>
</dbReference>
<dbReference type="NCBIfam" id="NF001222">
    <property type="entry name" value="PRK00199.1"/>
    <property type="match status" value="1"/>
</dbReference>
<dbReference type="PANTHER" id="PTHR33175">
    <property type="entry name" value="DNA-BINDING PROTEIN HU"/>
    <property type="match status" value="1"/>
</dbReference>
<dbReference type="PANTHER" id="PTHR33175:SF5">
    <property type="entry name" value="INTEGRATION HOST FACTOR SUBUNIT BETA"/>
    <property type="match status" value="1"/>
</dbReference>
<dbReference type="Pfam" id="PF00216">
    <property type="entry name" value="Bac_DNA_binding"/>
    <property type="match status" value="1"/>
</dbReference>
<dbReference type="PRINTS" id="PR01727">
    <property type="entry name" value="DNABINDINGHU"/>
</dbReference>
<dbReference type="SMART" id="SM00411">
    <property type="entry name" value="BHL"/>
    <property type="match status" value="1"/>
</dbReference>
<dbReference type="SUPFAM" id="SSF47729">
    <property type="entry name" value="IHF-like DNA-binding proteins"/>
    <property type="match status" value="1"/>
</dbReference>
<dbReference type="PROSITE" id="PS00045">
    <property type="entry name" value="HISTONE_LIKE"/>
    <property type="match status" value="1"/>
</dbReference>
<feature type="chain" id="PRO_1000060599" description="Integration host factor subunit beta">
    <location>
        <begin position="1"/>
        <end position="94"/>
    </location>
</feature>
<keyword id="KW-0233">DNA recombination</keyword>
<keyword id="KW-0238">DNA-binding</keyword>
<keyword id="KW-1185">Reference proteome</keyword>
<keyword id="KW-0804">Transcription</keyword>
<keyword id="KW-0805">Transcription regulation</keyword>
<keyword id="KW-0810">Translation regulation</keyword>
<name>IHFB_ECO24</name>
<comment type="function">
    <text evidence="1">This protein is one of the two subunits of integration host factor, a specific DNA-binding protein that functions in genetic recombination as well as in transcriptional and translational control.</text>
</comment>
<comment type="subunit">
    <text evidence="1">Heterodimer of an alpha and a beta chain.</text>
</comment>
<comment type="similarity">
    <text evidence="1">Belongs to the bacterial histone-like protein family.</text>
</comment>
<protein>
    <recommendedName>
        <fullName evidence="1">Integration host factor subunit beta</fullName>
        <shortName evidence="1">IHF-beta</shortName>
    </recommendedName>
</protein>
<organism>
    <name type="scientific">Escherichia coli O139:H28 (strain E24377A / ETEC)</name>
    <dbReference type="NCBI Taxonomy" id="331111"/>
    <lineage>
        <taxon>Bacteria</taxon>
        <taxon>Pseudomonadati</taxon>
        <taxon>Pseudomonadota</taxon>
        <taxon>Gammaproteobacteria</taxon>
        <taxon>Enterobacterales</taxon>
        <taxon>Enterobacteriaceae</taxon>
        <taxon>Escherichia</taxon>
    </lineage>
</organism>
<accession>A7ZK01</accession>
<sequence length="94" mass="10651">MTKSELIERLATQQSHIPAKTVEDAVKEMLEHMASTLAQGERIEIRGFGSFSLHYRAPRTGRNPKTGDKVELEGKYVPHFKPGKELRDRANIYG</sequence>
<proteinExistence type="inferred from homology"/>
<evidence type="ECO:0000255" key="1">
    <source>
        <dbReference type="HAMAP-Rule" id="MF_00381"/>
    </source>
</evidence>
<gene>
    <name evidence="1" type="primary">ihfB</name>
    <name evidence="1" type="synonym">himD</name>
    <name type="ordered locus">EcE24377A_1009</name>
</gene>
<reference key="1">
    <citation type="journal article" date="2008" name="J. Bacteriol.">
        <title>The pangenome structure of Escherichia coli: comparative genomic analysis of E. coli commensal and pathogenic isolates.</title>
        <authorList>
            <person name="Rasko D.A."/>
            <person name="Rosovitz M.J."/>
            <person name="Myers G.S.A."/>
            <person name="Mongodin E.F."/>
            <person name="Fricke W.F."/>
            <person name="Gajer P."/>
            <person name="Crabtree J."/>
            <person name="Sebaihia M."/>
            <person name="Thomson N.R."/>
            <person name="Chaudhuri R."/>
            <person name="Henderson I.R."/>
            <person name="Sperandio V."/>
            <person name="Ravel J."/>
        </authorList>
    </citation>
    <scope>NUCLEOTIDE SEQUENCE [LARGE SCALE GENOMIC DNA]</scope>
    <source>
        <strain>E24377A / ETEC</strain>
    </source>
</reference>